<keyword id="KW-0066">ATP synthesis</keyword>
<keyword id="KW-0067">ATP-binding</keyword>
<keyword id="KW-1003">Cell membrane</keyword>
<keyword id="KW-0139">CF(1)</keyword>
<keyword id="KW-0375">Hydrogen ion transport</keyword>
<keyword id="KW-0406">Ion transport</keyword>
<keyword id="KW-0472">Membrane</keyword>
<keyword id="KW-0547">Nucleotide-binding</keyword>
<keyword id="KW-1278">Translocase</keyword>
<keyword id="KW-0813">Transport</keyword>
<sequence length="456" mass="50170">MKKHTGTIISISGFVLKIEFNESDLPEISHALEYKTHQGTYLAEVVQHTGINTVSAIAIGEVSGLARGTEVVNLGHPIEVPVGESVQGRMLNVYGKAIDGKPEPEAEVKWPIFREQPLLRDLDTSKEILYTGIKVIDLICPILKGGKTGLFGGAGVGKSVLMQELINNISMMGGNSVFTGVGERVREGIGLYKELEASGVLSQTTVVLGQMNESPGVRMRVALTGLTIAEYLRDEEKKDVLLFIDNVFRFIQAGSEVSSLQGKIPITGGYQSTLSKEVGDFQDRIASTKDGSITSIQCVFLPADDIDDPSAVATFSHLDSTIVLERSIAALGIFPAVNPLQSFSRALNPNFVGERHYQLAVQVKYVLQRYTELQEIINVLGMAELSDDDKNLVHRARKIRNFLSQPFYVSEKFTGTEGIFVEMEDLLESIERILDGTYDDRSERDFLFIGSYKDLK</sequence>
<comment type="function">
    <text evidence="1">Produces ATP from ADP in the presence of a proton gradient across the membrane. The catalytic sites are hosted primarily by the beta subunits.</text>
</comment>
<comment type="catalytic activity">
    <reaction evidence="1">
        <text>ATP + H2O + 4 H(+)(in) = ADP + phosphate + 5 H(+)(out)</text>
        <dbReference type="Rhea" id="RHEA:57720"/>
        <dbReference type="ChEBI" id="CHEBI:15377"/>
        <dbReference type="ChEBI" id="CHEBI:15378"/>
        <dbReference type="ChEBI" id="CHEBI:30616"/>
        <dbReference type="ChEBI" id="CHEBI:43474"/>
        <dbReference type="ChEBI" id="CHEBI:456216"/>
        <dbReference type="EC" id="7.1.2.2"/>
    </reaction>
</comment>
<comment type="subunit">
    <text evidence="1">F-type ATPases have 2 components, CF(1) - the catalytic core - and CF(0) - the membrane proton channel. CF(1) has five subunits: alpha(3), beta(3), gamma(1), delta(1), epsilon(1). CF(0) has three main subunits: a(1), b(2) and c(9-12). The alpha and beta chains form an alternating ring which encloses part of the gamma chain. CF(1) is attached to CF(0) by a central stalk formed by the gamma and epsilon chains, while a peripheral stalk is formed by the delta and b chains.</text>
</comment>
<comment type="subcellular location">
    <subcellularLocation>
        <location evidence="1">Cell membrane</location>
        <topology evidence="1">Peripheral membrane protein</topology>
    </subcellularLocation>
</comment>
<comment type="similarity">
    <text evidence="1">Belongs to the ATPase alpha/beta chains family.</text>
</comment>
<dbReference type="EC" id="7.1.2.2" evidence="1"/>
<dbReference type="EMBL" id="AM263198">
    <property type="protein sequence ID" value="CAK19843.1"/>
    <property type="molecule type" value="Genomic_DNA"/>
</dbReference>
<dbReference type="RefSeq" id="WP_011701274.1">
    <property type="nucleotide sequence ID" value="NC_008555.1"/>
</dbReference>
<dbReference type="SMR" id="A0AFR1"/>
<dbReference type="STRING" id="386043.lwe0425"/>
<dbReference type="GeneID" id="61188315"/>
<dbReference type="KEGG" id="lwe:lwe0425"/>
<dbReference type="eggNOG" id="COG0055">
    <property type="taxonomic scope" value="Bacteria"/>
</dbReference>
<dbReference type="HOGENOM" id="CLU_022398_0_2_9"/>
<dbReference type="OrthoDB" id="9802718at2"/>
<dbReference type="Proteomes" id="UP000000779">
    <property type="component" value="Chromosome"/>
</dbReference>
<dbReference type="GO" id="GO:0005886">
    <property type="term" value="C:plasma membrane"/>
    <property type="evidence" value="ECO:0007669"/>
    <property type="project" value="UniProtKB-SubCell"/>
</dbReference>
<dbReference type="GO" id="GO:0045259">
    <property type="term" value="C:proton-transporting ATP synthase complex"/>
    <property type="evidence" value="ECO:0007669"/>
    <property type="project" value="UniProtKB-KW"/>
</dbReference>
<dbReference type="GO" id="GO:0005524">
    <property type="term" value="F:ATP binding"/>
    <property type="evidence" value="ECO:0007669"/>
    <property type="project" value="UniProtKB-UniRule"/>
</dbReference>
<dbReference type="GO" id="GO:0016887">
    <property type="term" value="F:ATP hydrolysis activity"/>
    <property type="evidence" value="ECO:0007669"/>
    <property type="project" value="InterPro"/>
</dbReference>
<dbReference type="GO" id="GO:0046933">
    <property type="term" value="F:proton-transporting ATP synthase activity, rotational mechanism"/>
    <property type="evidence" value="ECO:0007669"/>
    <property type="project" value="UniProtKB-UniRule"/>
</dbReference>
<dbReference type="CDD" id="cd18110">
    <property type="entry name" value="ATP-synt_F1_beta_C"/>
    <property type="match status" value="1"/>
</dbReference>
<dbReference type="CDD" id="cd18115">
    <property type="entry name" value="ATP-synt_F1_beta_N"/>
    <property type="match status" value="1"/>
</dbReference>
<dbReference type="CDD" id="cd01133">
    <property type="entry name" value="F1-ATPase_beta_CD"/>
    <property type="match status" value="1"/>
</dbReference>
<dbReference type="FunFam" id="1.10.1140.10:FF:000006">
    <property type="entry name" value="ATP synthase subunit beta"/>
    <property type="match status" value="1"/>
</dbReference>
<dbReference type="FunFam" id="3.40.50.300:FF:001630">
    <property type="entry name" value="ATP synthase subunit beta"/>
    <property type="match status" value="1"/>
</dbReference>
<dbReference type="Gene3D" id="2.40.10.170">
    <property type="match status" value="1"/>
</dbReference>
<dbReference type="Gene3D" id="1.10.1140.10">
    <property type="entry name" value="Bovine Mitochondrial F1-atpase, Atp Synthase Beta Chain, Chain D, domain 3"/>
    <property type="match status" value="1"/>
</dbReference>
<dbReference type="Gene3D" id="3.40.50.300">
    <property type="entry name" value="P-loop containing nucleotide triphosphate hydrolases"/>
    <property type="match status" value="1"/>
</dbReference>
<dbReference type="HAMAP" id="MF_01347">
    <property type="entry name" value="ATP_synth_beta_bact"/>
    <property type="match status" value="1"/>
</dbReference>
<dbReference type="InterPro" id="IPR003593">
    <property type="entry name" value="AAA+_ATPase"/>
</dbReference>
<dbReference type="InterPro" id="IPR055190">
    <property type="entry name" value="ATP-synt_VA_C"/>
</dbReference>
<dbReference type="InterPro" id="IPR005722">
    <property type="entry name" value="ATP_synth_F1_bsu"/>
</dbReference>
<dbReference type="InterPro" id="IPR020003">
    <property type="entry name" value="ATPase_a/bsu_AS"/>
</dbReference>
<dbReference type="InterPro" id="IPR050053">
    <property type="entry name" value="ATPase_alpha/beta_chains"/>
</dbReference>
<dbReference type="InterPro" id="IPR004100">
    <property type="entry name" value="ATPase_F1/V1/A1_a/bsu_N"/>
</dbReference>
<dbReference type="InterPro" id="IPR036121">
    <property type="entry name" value="ATPase_F1/V1/A1_a/bsu_N_sf"/>
</dbReference>
<dbReference type="InterPro" id="IPR000194">
    <property type="entry name" value="ATPase_F1/V1/A1_a/bsu_nucl-bd"/>
</dbReference>
<dbReference type="InterPro" id="IPR024034">
    <property type="entry name" value="ATPase_F1/V1_b/a_C"/>
</dbReference>
<dbReference type="InterPro" id="IPR027417">
    <property type="entry name" value="P-loop_NTPase"/>
</dbReference>
<dbReference type="NCBIfam" id="TIGR01039">
    <property type="entry name" value="atpD"/>
    <property type="match status" value="1"/>
</dbReference>
<dbReference type="PANTHER" id="PTHR15184">
    <property type="entry name" value="ATP SYNTHASE"/>
    <property type="match status" value="1"/>
</dbReference>
<dbReference type="PANTHER" id="PTHR15184:SF71">
    <property type="entry name" value="ATP SYNTHASE SUBUNIT BETA, MITOCHONDRIAL"/>
    <property type="match status" value="1"/>
</dbReference>
<dbReference type="Pfam" id="PF00006">
    <property type="entry name" value="ATP-synt_ab"/>
    <property type="match status" value="1"/>
</dbReference>
<dbReference type="Pfam" id="PF02874">
    <property type="entry name" value="ATP-synt_ab_N"/>
    <property type="match status" value="1"/>
</dbReference>
<dbReference type="Pfam" id="PF22919">
    <property type="entry name" value="ATP-synt_VA_C"/>
    <property type="match status" value="1"/>
</dbReference>
<dbReference type="SMART" id="SM00382">
    <property type="entry name" value="AAA"/>
    <property type="match status" value="1"/>
</dbReference>
<dbReference type="SUPFAM" id="SSF47917">
    <property type="entry name" value="C-terminal domain of alpha and beta subunits of F1 ATP synthase"/>
    <property type="match status" value="1"/>
</dbReference>
<dbReference type="SUPFAM" id="SSF50615">
    <property type="entry name" value="N-terminal domain of alpha and beta subunits of F1 ATP synthase"/>
    <property type="match status" value="1"/>
</dbReference>
<dbReference type="SUPFAM" id="SSF52540">
    <property type="entry name" value="P-loop containing nucleoside triphosphate hydrolases"/>
    <property type="match status" value="1"/>
</dbReference>
<dbReference type="PROSITE" id="PS00152">
    <property type="entry name" value="ATPASE_ALPHA_BETA"/>
    <property type="match status" value="1"/>
</dbReference>
<proteinExistence type="inferred from homology"/>
<gene>
    <name evidence="1" type="primary">atpD1</name>
    <name type="ordered locus">lwe0425</name>
</gene>
<accession>A0AFR1</accession>
<evidence type="ECO:0000255" key="1">
    <source>
        <dbReference type="HAMAP-Rule" id="MF_01347"/>
    </source>
</evidence>
<organism>
    <name type="scientific">Listeria welshimeri serovar 6b (strain ATCC 35897 / DSM 20650 / CCUG 15529 / CIP 8149 / NCTC 11857 / SLCC 5334 / V8)</name>
    <dbReference type="NCBI Taxonomy" id="386043"/>
    <lineage>
        <taxon>Bacteria</taxon>
        <taxon>Bacillati</taxon>
        <taxon>Bacillota</taxon>
        <taxon>Bacilli</taxon>
        <taxon>Bacillales</taxon>
        <taxon>Listeriaceae</taxon>
        <taxon>Listeria</taxon>
    </lineage>
</organism>
<protein>
    <recommendedName>
        <fullName evidence="1">ATP synthase subunit beta 1</fullName>
        <ecNumber evidence="1">7.1.2.2</ecNumber>
    </recommendedName>
    <alternativeName>
        <fullName evidence="1">ATP synthase F1 sector subunit beta 1</fullName>
    </alternativeName>
    <alternativeName>
        <fullName evidence="1">F-ATPase subunit beta 1</fullName>
    </alternativeName>
</protein>
<reference key="1">
    <citation type="journal article" date="2006" name="J. Bacteriol.">
        <title>Whole-genome sequence of Listeria welshimeri reveals common steps in genome reduction with Listeria innocua as compared to Listeria monocytogenes.</title>
        <authorList>
            <person name="Hain T."/>
            <person name="Steinweg C."/>
            <person name="Kuenne C.T."/>
            <person name="Billion A."/>
            <person name="Ghai R."/>
            <person name="Chatterjee S.S."/>
            <person name="Domann E."/>
            <person name="Kaerst U."/>
            <person name="Goesmann A."/>
            <person name="Bekel T."/>
            <person name="Bartels D."/>
            <person name="Kaiser O."/>
            <person name="Meyer F."/>
            <person name="Puehler A."/>
            <person name="Weisshaar B."/>
            <person name="Wehland J."/>
            <person name="Liang C."/>
            <person name="Dandekar T."/>
            <person name="Lampidis R."/>
            <person name="Kreft J."/>
            <person name="Goebel W."/>
            <person name="Chakraborty T."/>
        </authorList>
    </citation>
    <scope>NUCLEOTIDE SEQUENCE [LARGE SCALE GENOMIC DNA]</scope>
    <source>
        <strain>ATCC 35897 / DSM 20650 / CCUG 15529 / CIP 8149 / NCTC 11857 / SLCC 5334 / V8</strain>
    </source>
</reference>
<name>ATPB1_LISW6</name>
<feature type="chain" id="PRO_0000339540" description="ATP synthase subunit beta 1">
    <location>
        <begin position="1"/>
        <end position="456"/>
    </location>
</feature>
<feature type="binding site" evidence="1">
    <location>
        <begin position="152"/>
        <end position="159"/>
    </location>
    <ligand>
        <name>ATP</name>
        <dbReference type="ChEBI" id="CHEBI:30616"/>
    </ligand>
</feature>